<dbReference type="EMBL" id="AJ721109">
    <property type="protein sequence ID" value="CAG32768.1"/>
    <property type="molecule type" value="mRNA"/>
</dbReference>
<dbReference type="RefSeq" id="NP_001006300.1">
    <property type="nucleotide sequence ID" value="NM_001006300.2"/>
</dbReference>
<dbReference type="RefSeq" id="XP_015152341.1">
    <property type="nucleotide sequence ID" value="XM_015296855.4"/>
</dbReference>
<dbReference type="RefSeq" id="XP_040507064.1">
    <property type="nucleotide sequence ID" value="XM_040651130.2"/>
</dbReference>
<dbReference type="RefSeq" id="XP_040507065.1">
    <property type="nucleotide sequence ID" value="XM_040651131.2"/>
</dbReference>
<dbReference type="RefSeq" id="XP_046759067.1">
    <property type="nucleotide sequence ID" value="XM_046903111.1"/>
</dbReference>
<dbReference type="RefSeq" id="XP_046759068.1">
    <property type="nucleotide sequence ID" value="XM_046903112.1"/>
</dbReference>
<dbReference type="RefSeq" id="XP_046759069.1">
    <property type="nucleotide sequence ID" value="XM_046903113.1"/>
</dbReference>
<dbReference type="RefSeq" id="XP_046787164.1">
    <property type="nucleotide sequence ID" value="XM_046931208.1"/>
</dbReference>
<dbReference type="RefSeq" id="XP_046787165.1">
    <property type="nucleotide sequence ID" value="XM_046931209.1"/>
</dbReference>
<dbReference type="RefSeq" id="XP_046787166.1">
    <property type="nucleotide sequence ID" value="XM_046931210.1"/>
</dbReference>
<dbReference type="RefSeq" id="XP_046787167.1">
    <property type="nucleotide sequence ID" value="XM_046931211.1"/>
</dbReference>
<dbReference type="RefSeq" id="XP_046787168.1">
    <property type="nucleotide sequence ID" value="XM_046931212.1"/>
</dbReference>
<dbReference type="RefSeq" id="XP_046787169.1">
    <property type="nucleotide sequence ID" value="XM_046931213.1"/>
</dbReference>
<dbReference type="FunCoup" id="Q5ZHM5">
    <property type="interactions" value="2940"/>
</dbReference>
<dbReference type="STRING" id="9031.ENSGALP00000043636"/>
<dbReference type="PaxDb" id="9031-ENSGALP00000039623"/>
<dbReference type="Ensembl" id="ENSGALT00010048385.1">
    <property type="protein sequence ID" value="ENSGALP00010028529.1"/>
    <property type="gene ID" value="ENSGALG00010020027.1"/>
</dbReference>
<dbReference type="GeneID" id="419397"/>
<dbReference type="KEGG" id="gga:419397"/>
<dbReference type="CTD" id="11079"/>
<dbReference type="VEuPathDB" id="HostDB:geneid_419397"/>
<dbReference type="eggNOG" id="KOG1688">
    <property type="taxonomic scope" value="Eukaryota"/>
</dbReference>
<dbReference type="GeneTree" id="ENSGT00510000047137"/>
<dbReference type="HOGENOM" id="CLU_074889_1_0_1"/>
<dbReference type="InParanoid" id="Q5ZHM5"/>
<dbReference type="OMA" id="GWYVVCY"/>
<dbReference type="OrthoDB" id="448250at2759"/>
<dbReference type="PhylomeDB" id="Q5ZHM5"/>
<dbReference type="TreeFam" id="TF300029"/>
<dbReference type="PRO" id="PR:Q5ZHM5"/>
<dbReference type="Proteomes" id="UP000000539">
    <property type="component" value="Chromosome 21"/>
</dbReference>
<dbReference type="Bgee" id="ENSGALG00000021683">
    <property type="expression patterns" value="Expressed in muscle tissue and 14 other cell types or tissues"/>
</dbReference>
<dbReference type="GO" id="GO:0005783">
    <property type="term" value="C:endoplasmic reticulum"/>
    <property type="evidence" value="ECO:0007669"/>
    <property type="project" value="GOC"/>
</dbReference>
<dbReference type="GO" id="GO:0000139">
    <property type="term" value="C:Golgi membrane"/>
    <property type="evidence" value="ECO:0000318"/>
    <property type="project" value="GO_Central"/>
</dbReference>
<dbReference type="GO" id="GO:0006621">
    <property type="term" value="P:protein retention in ER lumen"/>
    <property type="evidence" value="ECO:0000318"/>
    <property type="project" value="GO_Central"/>
</dbReference>
<dbReference type="GO" id="GO:0006890">
    <property type="term" value="P:retrograde vesicle-mediated transport, Golgi to endoplasmic reticulum"/>
    <property type="evidence" value="ECO:0000318"/>
    <property type="project" value="GO_Central"/>
</dbReference>
<dbReference type="InterPro" id="IPR004932">
    <property type="entry name" value="Rer1"/>
</dbReference>
<dbReference type="PANTHER" id="PTHR10743">
    <property type="entry name" value="PROTEIN RER1"/>
    <property type="match status" value="1"/>
</dbReference>
<dbReference type="PANTHER" id="PTHR10743:SF0">
    <property type="entry name" value="PROTEIN RER1"/>
    <property type="match status" value="1"/>
</dbReference>
<dbReference type="Pfam" id="PF03248">
    <property type="entry name" value="Rer1"/>
    <property type="match status" value="1"/>
</dbReference>
<dbReference type="PIRSF" id="PIRSF016013">
    <property type="entry name" value="AtER_Rer1p"/>
    <property type="match status" value="1"/>
</dbReference>
<gene>
    <name type="primary">RER1</name>
    <name type="ORF">RCJMB04_35f13</name>
</gene>
<protein>
    <recommendedName>
        <fullName>Protein RER1</fullName>
    </recommendedName>
</protein>
<reference key="1">
    <citation type="journal article" date="2005" name="Genome Biol.">
        <title>Full-length cDNAs from chicken bursal lymphocytes to facilitate gene function analysis.</title>
        <authorList>
            <person name="Caldwell R.B."/>
            <person name="Kierzek A.M."/>
            <person name="Arakawa H."/>
            <person name="Bezzubov Y."/>
            <person name="Zaim J."/>
            <person name="Fiedler P."/>
            <person name="Kutter S."/>
            <person name="Blagodatski A."/>
            <person name="Kostovska D."/>
            <person name="Koter M."/>
            <person name="Plachy J."/>
            <person name="Carninci P."/>
            <person name="Hayashizaki Y."/>
            <person name="Buerstedde J.-M."/>
        </authorList>
    </citation>
    <scope>NUCLEOTIDE SEQUENCE [LARGE SCALE MRNA]</scope>
    <source>
        <strain>CB</strain>
        <tissue>Bursa of Fabricius</tissue>
    </source>
</reference>
<organism>
    <name type="scientific">Gallus gallus</name>
    <name type="common">Chicken</name>
    <dbReference type="NCBI Taxonomy" id="9031"/>
    <lineage>
        <taxon>Eukaryota</taxon>
        <taxon>Metazoa</taxon>
        <taxon>Chordata</taxon>
        <taxon>Craniata</taxon>
        <taxon>Vertebrata</taxon>
        <taxon>Euteleostomi</taxon>
        <taxon>Archelosauria</taxon>
        <taxon>Archosauria</taxon>
        <taxon>Dinosauria</taxon>
        <taxon>Saurischia</taxon>
        <taxon>Theropoda</taxon>
        <taxon>Coelurosauria</taxon>
        <taxon>Aves</taxon>
        <taxon>Neognathae</taxon>
        <taxon>Galloanserae</taxon>
        <taxon>Galliformes</taxon>
        <taxon>Phasianidae</taxon>
        <taxon>Phasianinae</taxon>
        <taxon>Gallus</taxon>
    </lineage>
</organism>
<feature type="chain" id="PRO_0000261129" description="Protein RER1">
    <location>
        <begin position="1"/>
        <end position="196"/>
    </location>
</feature>
<feature type="transmembrane region" description="Helical" evidence="2">
    <location>
        <begin position="41"/>
        <end position="61"/>
    </location>
</feature>
<feature type="transmembrane region" description="Helical" evidence="2">
    <location>
        <begin position="63"/>
        <end position="83"/>
    </location>
</feature>
<feature type="transmembrane region" description="Helical" evidence="2">
    <location>
        <begin position="140"/>
        <end position="160"/>
    </location>
</feature>
<proteinExistence type="evidence at transcript level"/>
<accession>Q5ZHM5</accession>
<comment type="function">
    <text evidence="1">Involved in the retrieval of endoplasmic reticulum membrane proteins from the early Golgi compartment.</text>
</comment>
<comment type="subcellular location">
    <subcellularLocation>
        <location evidence="1">Golgi apparatus membrane</location>
        <topology evidence="1">Multi-pass membrane protein</topology>
    </subcellularLocation>
</comment>
<comment type="similarity">
    <text evidence="3">Belongs to the RER1 family.</text>
</comment>
<sequence length="196" mass="23032">MSEGDSIGESVHGKPSVVYRFFTRLGQIYQSWLDKSTPYTAVRWIVTLGLSFIYMIRVYLLQGWYIVTYALGIYHLNLFIAFLSPKVDPSLMEDSDDGPSLPTRQNEEFRPFIRRLPEFKFWHSATKGILVAMACTFFEAFNVPVFWPILVMYFIMLFCITMKRQIKHMIKYRYIPFTHGKRKYKGKEDVGKTFAS</sequence>
<name>RER1_CHICK</name>
<evidence type="ECO:0000250" key="1"/>
<evidence type="ECO:0000255" key="2"/>
<evidence type="ECO:0000305" key="3"/>
<keyword id="KW-0333">Golgi apparatus</keyword>
<keyword id="KW-0472">Membrane</keyword>
<keyword id="KW-1185">Reference proteome</keyword>
<keyword id="KW-0812">Transmembrane</keyword>
<keyword id="KW-1133">Transmembrane helix</keyword>